<gene>
    <name type="primary">FUN30</name>
    <name type="ordered locus">YAL019W</name>
    <name type="ORF">YAL001</name>
</gene>
<proteinExistence type="evidence at protein level"/>
<reference key="1">
    <citation type="journal article" date="1992" name="Yeast">
        <title>Identification of a Saccharomyces cerevisiae homolog of the SNF2 transcriptional regulator in the DNA sequence of an 8.6 kb region in the LTE1-CYS1 interval on the left arm of chromosome I.</title>
        <authorList>
            <person name="Clark M.W."/>
            <person name="Zhong W.-W."/>
            <person name="Keng T."/>
            <person name="Storms R.K."/>
            <person name="Barton A.B."/>
            <person name="Kaback D.B."/>
            <person name="Bussey H."/>
        </authorList>
    </citation>
    <scope>NUCLEOTIDE SEQUENCE [GENOMIC DNA]</scope>
    <source>
        <strain>ATCC 204511 / S288c / AB972</strain>
    </source>
</reference>
<reference key="2">
    <citation type="journal article" date="1993" name="Genome">
        <title>Sequencing of chromosome I from Saccharomyces cerevisiae: analysis of a 32 kb region between the LTE1 and SPO7 genes.</title>
        <authorList>
            <person name="Ouellette B.F.F."/>
            <person name="Clark M.W."/>
            <person name="Keng T."/>
            <person name="Storms R.K."/>
            <person name="Zhong W.-W."/>
            <person name="Zeng B."/>
            <person name="Fortin N."/>
            <person name="Delaney S."/>
            <person name="Barton A.B."/>
            <person name="Kaback D.B."/>
            <person name="Bussey H."/>
        </authorList>
    </citation>
    <scope>NUCLEOTIDE SEQUENCE [GENOMIC DNA]</scope>
    <source>
        <strain>ATCC 204511 / S288c / AB972</strain>
    </source>
</reference>
<reference key="3">
    <citation type="journal article" date="1994" name="J. Bacteriol.">
        <title>Molecular cloning of chromosome I DNA from Saccharomyces cerevisiae: analysis of the genes in the FUN38-MAK16-SPO7 region.</title>
        <authorList>
            <person name="Barton A.B."/>
            <person name="Kaback D.B."/>
        </authorList>
    </citation>
    <scope>NUCLEOTIDE SEQUENCE [GENOMIC DNA]</scope>
    <source>
        <strain>ATCC 204511 / S288c / AB972</strain>
    </source>
</reference>
<reference key="4">
    <citation type="journal article" date="1995" name="Proc. Natl. Acad. Sci. U.S.A.">
        <title>The nucleotide sequence of chromosome I from Saccharomyces cerevisiae.</title>
        <authorList>
            <person name="Bussey H."/>
            <person name="Kaback D.B."/>
            <person name="Zhong W.-W."/>
            <person name="Vo D.H."/>
            <person name="Clark M.W."/>
            <person name="Fortin N."/>
            <person name="Hall J."/>
            <person name="Ouellette B.F.F."/>
            <person name="Keng T."/>
            <person name="Barton A.B."/>
            <person name="Su Y."/>
            <person name="Davies C.J."/>
            <person name="Storms R.K."/>
        </authorList>
    </citation>
    <scope>NUCLEOTIDE SEQUENCE [LARGE SCALE GENOMIC DNA]</scope>
    <source>
        <strain>ATCC 204508 / S288c</strain>
    </source>
</reference>
<reference key="5">
    <citation type="journal article" date="2014" name="G3 (Bethesda)">
        <title>The reference genome sequence of Saccharomyces cerevisiae: Then and now.</title>
        <authorList>
            <person name="Engel S.R."/>
            <person name="Dietrich F.S."/>
            <person name="Fisk D.G."/>
            <person name="Binkley G."/>
            <person name="Balakrishnan R."/>
            <person name="Costanzo M.C."/>
            <person name="Dwight S.S."/>
            <person name="Hitz B.C."/>
            <person name="Karra K."/>
            <person name="Nash R.S."/>
            <person name="Weng S."/>
            <person name="Wong E.D."/>
            <person name="Lloyd P."/>
            <person name="Skrzypek M.S."/>
            <person name="Miyasato S.R."/>
            <person name="Simison M."/>
            <person name="Cherry J.M."/>
        </authorList>
    </citation>
    <scope>GENOME REANNOTATION</scope>
    <source>
        <strain>ATCC 204508 / S288c</strain>
    </source>
</reference>
<reference key="6">
    <citation type="journal article" date="2003" name="Nature">
        <title>Global analysis of protein expression in yeast.</title>
        <authorList>
            <person name="Ghaemmaghami S."/>
            <person name="Huh W.-K."/>
            <person name="Bower K."/>
            <person name="Howson R.W."/>
            <person name="Belle A."/>
            <person name="Dephoure N."/>
            <person name="O'Shea E.K."/>
            <person name="Weissman J.S."/>
        </authorList>
    </citation>
    <scope>LEVEL OF PROTEIN EXPRESSION [LARGE SCALE ANALYSIS]</scope>
</reference>
<reference key="7">
    <citation type="journal article" date="2007" name="J. Proteome Res.">
        <title>Large-scale phosphorylation analysis of alpha-factor-arrested Saccharomyces cerevisiae.</title>
        <authorList>
            <person name="Li X."/>
            <person name="Gerber S.A."/>
            <person name="Rudner A.D."/>
            <person name="Beausoleil S.A."/>
            <person name="Haas W."/>
            <person name="Villen J."/>
            <person name="Elias J.E."/>
            <person name="Gygi S.P."/>
        </authorList>
    </citation>
    <scope>IDENTIFICATION BY MASS SPECTROMETRY [LARGE SCALE ANALYSIS]</scope>
    <source>
        <strain>ADR376</strain>
    </source>
</reference>
<reference key="8">
    <citation type="journal article" date="2008" name="Mol. Cell. Proteomics">
        <title>A multidimensional chromatography technology for in-depth phosphoproteome analysis.</title>
        <authorList>
            <person name="Albuquerque C.P."/>
            <person name="Smolka M.B."/>
            <person name="Payne S.H."/>
            <person name="Bafna V."/>
            <person name="Eng J."/>
            <person name="Zhou H."/>
        </authorList>
    </citation>
    <scope>PHOSPHORYLATION [LARGE SCALE ANALYSIS] AT SER-232 AND SER-369</scope>
    <scope>IDENTIFICATION BY MASS SPECTROMETRY [LARGE SCALE ANALYSIS]</scope>
</reference>
<reference key="9">
    <citation type="journal article" date="2009" name="PLoS ONE">
        <title>The SNF2-family member Fun30 promotes gene silencing in heterochromatic loci.</title>
        <authorList>
            <person name="Neves-Costa A."/>
            <person name="Will W.R."/>
            <person name="Vetter A.T."/>
            <person name="Miller J.R."/>
            <person name="Varga-Weisz P."/>
        </authorList>
    </citation>
    <scope>FUNCTION</scope>
</reference>
<reference key="10">
    <citation type="journal article" date="2009" name="Science">
        <title>Global analysis of Cdk1 substrate phosphorylation sites provides insights into evolution.</title>
        <authorList>
            <person name="Holt L.J."/>
            <person name="Tuch B.B."/>
            <person name="Villen J."/>
            <person name="Johnson A.D."/>
            <person name="Gygi S.P."/>
            <person name="Morgan D.O."/>
        </authorList>
    </citation>
    <scope>PHOSPHORYLATION [LARGE SCALE ANALYSIS] AT SER-451</scope>
    <scope>IDENTIFICATION BY MASS SPECTROMETRY [LARGE SCALE ANALYSIS]</scope>
</reference>
<reference key="11">
    <citation type="journal article" date="2010" name="J. Biol. Chem.">
        <title>The Snf2 homolog Fun30 acts as a homodimeric ATP-dependent chromatin-remodeling enzyme.</title>
        <authorList>
            <person name="Awad S."/>
            <person name="Ryan D."/>
            <person name="Prochasson P."/>
            <person name="Owen-Hughes T."/>
            <person name="Hassan A.H."/>
        </authorList>
    </citation>
    <scope>FUNCTION</scope>
    <scope>SUBUNIT</scope>
</reference>
<reference key="12">
    <citation type="journal article" date="2012" name="Mol. Cell. Biol.">
        <title>The Saccharomyces cerevisiae chromatin remodeler Fun30 regulates DNA end-resection and checkpoint deactivation.</title>
        <authorList>
            <person name="Eapen V.V."/>
            <person name="Sugawara N."/>
            <person name="Tsabar M."/>
            <person name="Wu W.H."/>
            <person name="Haber J.E."/>
        </authorList>
    </citation>
    <scope>FUNCTION</scope>
    <scope>SUBCELLULAR LOCATION</scope>
</reference>
<reference key="13">
    <citation type="journal article" date="2012" name="Nature">
        <title>The Fun30 nucleosome remodeller promotes resection of DNA double-strand break ends.</title>
        <authorList>
            <person name="Chen X."/>
            <person name="Cui D."/>
            <person name="Papusha A."/>
            <person name="Zhang X."/>
            <person name="Chu C.D."/>
            <person name="Tang J."/>
            <person name="Chen K."/>
            <person name="Pan X."/>
            <person name="Ira G."/>
        </authorList>
    </citation>
    <scope>FUNCTION</scope>
    <scope>SUBCELLULAR LOCATION</scope>
    <scope>DISRUPTION PHENOTYPE</scope>
</reference>
<reference key="14">
    <citation type="journal article" date="2012" name="Nature">
        <title>The yeast Fun30 and human SMARCAD1 chromatin remodellers promote DNA end resection.</title>
        <authorList>
            <person name="Costelloe T."/>
            <person name="Louge R."/>
            <person name="Tomimatsu N."/>
            <person name="Mukherjee B."/>
            <person name="Martini E."/>
            <person name="Khadaroo B."/>
            <person name="Dubois K."/>
            <person name="Wiegant W.W."/>
            <person name="Thierry A."/>
            <person name="Burma S."/>
            <person name="van Attikum H."/>
            <person name="Llorente B."/>
        </authorList>
    </citation>
    <scope>FUNCTION</scope>
    <scope>MUTAGENESIS OF LYS-603</scope>
</reference>
<reference key="15">
    <citation type="journal article" date="2012" name="PLoS Genet.">
        <title>SWI/SNF-Like chromatin remodeling factor Fun30 supports point centromere function in S. cerevisiae.</title>
        <authorList>
            <person name="Durand-Dubief M."/>
            <person name="Will W.R."/>
            <person name="Petrini E."/>
            <person name="Theodorou D."/>
            <person name="Harris R.R."/>
            <person name="Crawford M.R."/>
            <person name="Paszkiewicz K."/>
            <person name="Krueger F."/>
            <person name="Correra R.M."/>
            <person name="Vetter A.T."/>
            <person name="Miller J.R."/>
            <person name="Kent N.A."/>
            <person name="Varga-Weisz P."/>
        </authorList>
    </citation>
    <scope>FUNCTION</scope>
</reference>
<comment type="function">
    <text evidence="5 6 7 8 9 10">DNA helicase that possesses intrinsic ATP-dependent nucleosome-remodeling activity and is both required for DNA repair and heterochromatin organization. Promotes DNA end resection of double-strand breaks (DSBs) following DNA damage: probably acts by weakening histone DNA interactions in nucleosomes flanking DSBs, facilitating single-stranded DNA (ssDNA) production by the EXO1 and SGS1 machinery. Promotes gene silencing at heterochromatin by regulating the chromatin structure within or around silent loci. Also required for heterochromatin organization at centromeres.</text>
</comment>
<comment type="catalytic activity">
    <reaction>
        <text>ATP + H2O = ADP + phosphate + H(+)</text>
        <dbReference type="Rhea" id="RHEA:13065"/>
        <dbReference type="ChEBI" id="CHEBI:15377"/>
        <dbReference type="ChEBI" id="CHEBI:15378"/>
        <dbReference type="ChEBI" id="CHEBI:30616"/>
        <dbReference type="ChEBI" id="CHEBI:43474"/>
        <dbReference type="ChEBI" id="CHEBI:456216"/>
        <dbReference type="EC" id="3.6.4.12"/>
    </reaction>
</comment>
<comment type="subunit">
    <text evidence="6">Homodimer.</text>
</comment>
<comment type="interaction">
    <interactant intactId="EBI-20621">
        <id>P31380</id>
    </interactant>
    <interactant intactId="EBI-20621">
        <id>P31380</id>
        <label>FUN30</label>
    </interactant>
    <organismsDiffer>false</organismsDiffer>
    <experiments>5</experiments>
</comment>
<comment type="subcellular location">
    <subcellularLocation>
        <location>Nucleus</location>
    </subcellularLocation>
    <subcellularLocation>
        <location>Chromosome</location>
    </subcellularLocation>
    <text>Recruited to double-strand breaks (DSBs) sites of DNA damage.</text>
</comment>
<comment type="disruption phenotype">
    <text evidence="7">Impaired ability to repair double-strand breaks (DSBs).</text>
</comment>
<comment type="miscellaneous">
    <text evidence="4">Present with 6800 molecules/cell in log phase SD medium.</text>
</comment>
<comment type="similarity">
    <text evidence="11">Belongs to the SNF2/RAD54 helicase family.</text>
</comment>
<comment type="caution">
    <text evidence="12 13">Was initially reported to contain a CUE domain (PubMed:19956593). However, no CUE domain is predicted by prediction tools and the CUE-like region does not show no affinity for ubiquitinated histones (PubMed:20075079).</text>
</comment>
<dbReference type="EC" id="3.6.4.12"/>
<dbReference type="EMBL" id="L05146">
    <property type="protein sequence ID" value="AAC04938.1"/>
    <property type="molecule type" value="Genomic_DNA"/>
</dbReference>
<dbReference type="EMBL" id="BK006935">
    <property type="protein sequence ID" value="DAA06969.1"/>
    <property type="molecule type" value="Genomic_DNA"/>
</dbReference>
<dbReference type="PIR" id="S22266">
    <property type="entry name" value="S22266"/>
</dbReference>
<dbReference type="RefSeq" id="NP_009383.1">
    <property type="nucleotide sequence ID" value="NM_001178164.1"/>
</dbReference>
<dbReference type="PDB" id="5GN1">
    <property type="method" value="X-ray"/>
    <property type="resolution" value="1.95 A"/>
    <property type="chains" value="A/B/C/D=780-1122"/>
</dbReference>
<dbReference type="PDBsum" id="5GN1"/>
<dbReference type="SMR" id="P31380"/>
<dbReference type="BioGRID" id="31747">
    <property type="interactions" value="223"/>
</dbReference>
<dbReference type="ComplexPortal" id="CPX-3297">
    <property type="entry name" value="FUN30 complex"/>
</dbReference>
<dbReference type="DIP" id="DIP-2541N"/>
<dbReference type="FunCoup" id="P31380">
    <property type="interactions" value="69"/>
</dbReference>
<dbReference type="IntAct" id="P31380">
    <property type="interactions" value="17"/>
</dbReference>
<dbReference type="MINT" id="P31380"/>
<dbReference type="STRING" id="4932.YAL019W"/>
<dbReference type="GlyGen" id="P31380">
    <property type="glycosylation" value="1 site"/>
</dbReference>
<dbReference type="iPTMnet" id="P31380"/>
<dbReference type="PaxDb" id="4932-YAL019W"/>
<dbReference type="PeptideAtlas" id="P31380"/>
<dbReference type="EnsemblFungi" id="YAL019W_mRNA">
    <property type="protein sequence ID" value="YAL019W"/>
    <property type="gene ID" value="YAL019W"/>
</dbReference>
<dbReference type="GeneID" id="851214"/>
<dbReference type="KEGG" id="sce:YAL019W"/>
<dbReference type="AGR" id="SGD:S000000017"/>
<dbReference type="SGD" id="S000000017">
    <property type="gene designation" value="FUN30"/>
</dbReference>
<dbReference type="VEuPathDB" id="FungiDB:YAL019W"/>
<dbReference type="eggNOG" id="KOG0389">
    <property type="taxonomic scope" value="Eukaryota"/>
</dbReference>
<dbReference type="GeneTree" id="ENSGT00910000144252"/>
<dbReference type="HOGENOM" id="CLU_000315_16_2_1"/>
<dbReference type="InParanoid" id="P31380"/>
<dbReference type="OMA" id="IQDKWAA"/>
<dbReference type="OrthoDB" id="5857104at2759"/>
<dbReference type="BioCyc" id="YEAST:G3O-28831-MONOMER"/>
<dbReference type="BRENDA" id="3.6.4.12">
    <property type="organism ID" value="984"/>
</dbReference>
<dbReference type="BioGRID-ORCS" id="851214">
    <property type="hits" value="5 hits in 10 CRISPR screens"/>
</dbReference>
<dbReference type="PRO" id="PR:P31380"/>
<dbReference type="Proteomes" id="UP000002311">
    <property type="component" value="Chromosome I"/>
</dbReference>
<dbReference type="RNAct" id="P31380">
    <property type="molecule type" value="protein"/>
</dbReference>
<dbReference type="GO" id="GO:0000785">
    <property type="term" value="C:chromatin"/>
    <property type="evidence" value="ECO:0000314"/>
    <property type="project" value="SGD"/>
</dbReference>
<dbReference type="GO" id="GO:0000775">
    <property type="term" value="C:chromosome, centromeric region"/>
    <property type="evidence" value="ECO:0000314"/>
    <property type="project" value="SGD"/>
</dbReference>
<dbReference type="GO" id="GO:0000781">
    <property type="term" value="C:chromosome, telomeric region"/>
    <property type="evidence" value="ECO:0007669"/>
    <property type="project" value="GOC"/>
</dbReference>
<dbReference type="GO" id="GO:0031934">
    <property type="term" value="C:mating-type region heterochromatin"/>
    <property type="evidence" value="ECO:0000314"/>
    <property type="project" value="SGD"/>
</dbReference>
<dbReference type="GO" id="GO:0005739">
    <property type="term" value="C:mitochondrion"/>
    <property type="evidence" value="ECO:0007005"/>
    <property type="project" value="SGD"/>
</dbReference>
<dbReference type="GO" id="GO:0005634">
    <property type="term" value="C:nucleus"/>
    <property type="evidence" value="ECO:0007005"/>
    <property type="project" value="SGD"/>
</dbReference>
<dbReference type="GO" id="GO:0005524">
    <property type="term" value="F:ATP binding"/>
    <property type="evidence" value="ECO:0007669"/>
    <property type="project" value="UniProtKB-KW"/>
</dbReference>
<dbReference type="GO" id="GO:0016887">
    <property type="term" value="F:ATP hydrolysis activity"/>
    <property type="evidence" value="ECO:0007669"/>
    <property type="project" value="RHEA"/>
</dbReference>
<dbReference type="GO" id="GO:0140658">
    <property type="term" value="F:ATP-dependent chromatin remodeler activity"/>
    <property type="evidence" value="ECO:0000314"/>
    <property type="project" value="SGD"/>
</dbReference>
<dbReference type="GO" id="GO:0003682">
    <property type="term" value="F:chromatin binding"/>
    <property type="evidence" value="ECO:0000314"/>
    <property type="project" value="SGD"/>
</dbReference>
<dbReference type="GO" id="GO:0003677">
    <property type="term" value="F:DNA binding"/>
    <property type="evidence" value="ECO:0000314"/>
    <property type="project" value="SGD"/>
</dbReference>
<dbReference type="GO" id="GO:0004386">
    <property type="term" value="F:helicase activity"/>
    <property type="evidence" value="ECO:0007669"/>
    <property type="project" value="UniProtKB-KW"/>
</dbReference>
<dbReference type="GO" id="GO:0042802">
    <property type="term" value="F:identical protein binding"/>
    <property type="evidence" value="ECO:0000353"/>
    <property type="project" value="IntAct"/>
</dbReference>
<dbReference type="GO" id="GO:0140750">
    <property type="term" value="F:nucleosome array spacer activity"/>
    <property type="evidence" value="ECO:0000318"/>
    <property type="project" value="GO_Central"/>
</dbReference>
<dbReference type="GO" id="GO:0006338">
    <property type="term" value="P:chromatin remodeling"/>
    <property type="evidence" value="ECO:0000314"/>
    <property type="project" value="ComplexPortal"/>
</dbReference>
<dbReference type="GO" id="GO:0000729">
    <property type="term" value="P:DNA double-strand break processing"/>
    <property type="evidence" value="ECO:0000315"/>
    <property type="project" value="SGD"/>
</dbReference>
<dbReference type="GO" id="GO:1990918">
    <property type="term" value="P:double-strand break repair involved in meiotic recombination"/>
    <property type="evidence" value="ECO:0000315"/>
    <property type="project" value="SGD"/>
</dbReference>
<dbReference type="GO" id="GO:0031507">
    <property type="term" value="P:heterochromatin formation"/>
    <property type="evidence" value="ECO:0000315"/>
    <property type="project" value="SGD"/>
</dbReference>
<dbReference type="GO" id="GO:0000706">
    <property type="term" value="P:meiotic DNA double-strand break processing"/>
    <property type="evidence" value="ECO:0000315"/>
    <property type="project" value="SGD"/>
</dbReference>
<dbReference type="GO" id="GO:0000122">
    <property type="term" value="P:negative regulation of transcription by RNA polymerase II"/>
    <property type="evidence" value="ECO:0000315"/>
    <property type="project" value="SGD"/>
</dbReference>
<dbReference type="GO" id="GO:0033120">
    <property type="term" value="P:positive regulation of RNA splicing"/>
    <property type="evidence" value="ECO:0000315"/>
    <property type="project" value="SGD"/>
</dbReference>
<dbReference type="GO" id="GO:0045944">
    <property type="term" value="P:positive regulation of transcription by RNA polymerase II"/>
    <property type="evidence" value="ECO:0000318"/>
    <property type="project" value="GO_Central"/>
</dbReference>
<dbReference type="GO" id="GO:0000183">
    <property type="term" value="P:rDNA heterochromatin formation"/>
    <property type="evidence" value="ECO:0000315"/>
    <property type="project" value="SGD"/>
</dbReference>
<dbReference type="GO" id="GO:0030466">
    <property type="term" value="P:silent mating-type cassette heterochromatin formation"/>
    <property type="evidence" value="ECO:0000315"/>
    <property type="project" value="SGD"/>
</dbReference>
<dbReference type="GO" id="GO:0031509">
    <property type="term" value="P:subtelomeric heterochromatin formation"/>
    <property type="evidence" value="ECO:0000315"/>
    <property type="project" value="SGD"/>
</dbReference>
<dbReference type="CDD" id="cd17998">
    <property type="entry name" value="DEXHc_SMARCAD1"/>
    <property type="match status" value="1"/>
</dbReference>
<dbReference type="CDD" id="cd18793">
    <property type="entry name" value="SF2_C_SNF"/>
    <property type="match status" value="1"/>
</dbReference>
<dbReference type="FunFam" id="3.40.50.300:FF:002378">
    <property type="entry name" value="ATP-dependent helicase FUN30"/>
    <property type="match status" value="1"/>
</dbReference>
<dbReference type="FunFam" id="3.40.50.10810:FF:000014">
    <property type="entry name" value="SWI/SNF-related matrix-associated actin-dependent regulator of chromatin subfamily A containing DEAD/H box 1"/>
    <property type="match status" value="1"/>
</dbReference>
<dbReference type="Gene3D" id="3.40.50.300">
    <property type="entry name" value="P-loop containing nucleotide triphosphate hydrolases"/>
    <property type="match status" value="1"/>
</dbReference>
<dbReference type="Gene3D" id="3.40.50.10810">
    <property type="entry name" value="Tandem AAA-ATPase domain"/>
    <property type="match status" value="1"/>
</dbReference>
<dbReference type="InterPro" id="IPR014001">
    <property type="entry name" value="Helicase_ATP-bd"/>
</dbReference>
<dbReference type="InterPro" id="IPR001650">
    <property type="entry name" value="Helicase_C-like"/>
</dbReference>
<dbReference type="InterPro" id="IPR027417">
    <property type="entry name" value="P-loop_NTPase"/>
</dbReference>
<dbReference type="InterPro" id="IPR038718">
    <property type="entry name" value="SNF2-like_sf"/>
</dbReference>
<dbReference type="InterPro" id="IPR049730">
    <property type="entry name" value="SNF2/RAD54-like_C"/>
</dbReference>
<dbReference type="InterPro" id="IPR000330">
    <property type="entry name" value="SNF2_N"/>
</dbReference>
<dbReference type="PANTHER" id="PTHR10799">
    <property type="entry name" value="SNF2/RAD54 HELICASE FAMILY"/>
    <property type="match status" value="1"/>
</dbReference>
<dbReference type="Pfam" id="PF00271">
    <property type="entry name" value="Helicase_C"/>
    <property type="match status" value="1"/>
</dbReference>
<dbReference type="Pfam" id="PF00176">
    <property type="entry name" value="SNF2-rel_dom"/>
    <property type="match status" value="1"/>
</dbReference>
<dbReference type="SMART" id="SM00487">
    <property type="entry name" value="DEXDc"/>
    <property type="match status" value="1"/>
</dbReference>
<dbReference type="SMART" id="SM00490">
    <property type="entry name" value="HELICc"/>
    <property type="match status" value="1"/>
</dbReference>
<dbReference type="SUPFAM" id="SSF52540">
    <property type="entry name" value="P-loop containing nucleoside triphosphate hydrolases"/>
    <property type="match status" value="2"/>
</dbReference>
<dbReference type="PROSITE" id="PS51192">
    <property type="entry name" value="HELICASE_ATP_BIND_1"/>
    <property type="match status" value="1"/>
</dbReference>
<dbReference type="PROSITE" id="PS51194">
    <property type="entry name" value="HELICASE_CTER"/>
    <property type="match status" value="1"/>
</dbReference>
<feature type="chain" id="PRO_0000074384" description="ATP-dependent helicase FUN30">
    <location>
        <begin position="1"/>
        <end position="1131"/>
    </location>
</feature>
<feature type="domain" description="Helicase ATP-binding" evidence="1">
    <location>
        <begin position="584"/>
        <end position="752"/>
    </location>
</feature>
<feature type="domain" description="Helicase C-terminal" evidence="2">
    <location>
        <begin position="953"/>
        <end position="1108"/>
    </location>
</feature>
<feature type="region of interest" description="Disordered" evidence="3">
    <location>
        <begin position="1"/>
        <end position="70"/>
    </location>
</feature>
<feature type="region of interest" description="CUE-like region">
    <location>
        <begin position="76"/>
        <end position="111"/>
    </location>
</feature>
<feature type="region of interest" description="Disordered" evidence="3">
    <location>
        <begin position="114"/>
        <end position="141"/>
    </location>
</feature>
<feature type="region of interest" description="Disordered" evidence="3">
    <location>
        <begin position="242"/>
        <end position="273"/>
    </location>
</feature>
<feature type="region of interest" description="Disordered" evidence="3">
    <location>
        <begin position="327"/>
        <end position="350"/>
    </location>
</feature>
<feature type="region of interest" description="Disordered" evidence="3">
    <location>
        <begin position="400"/>
        <end position="533"/>
    </location>
</feature>
<feature type="short sequence motif" description="DEGH box">
    <location>
        <begin position="703"/>
        <end position="706"/>
    </location>
</feature>
<feature type="compositionally biased region" description="Polar residues" evidence="3">
    <location>
        <begin position="16"/>
        <end position="36"/>
    </location>
</feature>
<feature type="compositionally biased region" description="Acidic residues" evidence="3">
    <location>
        <begin position="250"/>
        <end position="271"/>
    </location>
</feature>
<feature type="compositionally biased region" description="Acidic residues" evidence="3">
    <location>
        <begin position="405"/>
        <end position="416"/>
    </location>
</feature>
<feature type="compositionally biased region" description="Low complexity" evidence="3">
    <location>
        <begin position="417"/>
        <end position="432"/>
    </location>
</feature>
<feature type="compositionally biased region" description="Basic and acidic residues" evidence="3">
    <location>
        <begin position="433"/>
        <end position="442"/>
    </location>
</feature>
<feature type="compositionally biased region" description="Acidic residues" evidence="3">
    <location>
        <begin position="480"/>
        <end position="533"/>
    </location>
</feature>
<feature type="binding site" evidence="11">
    <location>
        <begin position="597"/>
        <end position="604"/>
    </location>
    <ligand>
        <name>ATP</name>
        <dbReference type="ChEBI" id="CHEBI:30616"/>
    </ligand>
</feature>
<feature type="modified residue" description="Phosphoserine" evidence="14">
    <location>
        <position position="232"/>
    </location>
</feature>
<feature type="modified residue" description="Phosphoserine" evidence="14">
    <location>
        <position position="369"/>
    </location>
</feature>
<feature type="modified residue" description="Phosphoserine" evidence="15">
    <location>
        <position position="451"/>
    </location>
</feature>
<feature type="mutagenesis site" description="Abolishes both the silencing function and the ability to promote DNA end resection of double-strand breaks (DSBs)." evidence="8">
    <original>K</original>
    <variation>R</variation>
    <location>
        <position position="603"/>
    </location>
</feature>
<feature type="strand" evidence="16">
    <location>
        <begin position="813"/>
        <end position="820"/>
    </location>
</feature>
<feature type="helix" evidence="16">
    <location>
        <begin position="824"/>
        <end position="846"/>
    </location>
</feature>
<feature type="helix" evidence="16">
    <location>
        <begin position="853"/>
        <end position="858"/>
    </location>
</feature>
<feature type="helix" evidence="16">
    <location>
        <begin position="859"/>
        <end position="861"/>
    </location>
</feature>
<feature type="helix" evidence="16">
    <location>
        <begin position="864"/>
        <end position="874"/>
    </location>
</feature>
<feature type="helix" evidence="16">
    <location>
        <begin position="878"/>
        <end position="880"/>
    </location>
</feature>
<feature type="strand" evidence="16">
    <location>
        <begin position="883"/>
        <end position="885"/>
    </location>
</feature>
<feature type="helix" evidence="16">
    <location>
        <begin position="887"/>
        <end position="897"/>
    </location>
</feature>
<feature type="helix" evidence="16">
    <location>
        <begin position="901"/>
        <end position="904"/>
    </location>
</feature>
<feature type="helix" evidence="16">
    <location>
        <begin position="909"/>
        <end position="917"/>
    </location>
</feature>
<feature type="helix" evidence="16">
    <location>
        <begin position="921"/>
        <end position="930"/>
    </location>
</feature>
<feature type="helix" evidence="16">
    <location>
        <begin position="932"/>
        <end position="935"/>
    </location>
</feature>
<feature type="helix" evidence="16">
    <location>
        <begin position="936"/>
        <end position="938"/>
    </location>
</feature>
<feature type="helix" evidence="16">
    <location>
        <begin position="944"/>
        <end position="946"/>
    </location>
</feature>
<feature type="helix" evidence="16">
    <location>
        <begin position="949"/>
        <end position="962"/>
    </location>
</feature>
<feature type="strand" evidence="16">
    <location>
        <begin position="969"/>
        <end position="974"/>
    </location>
</feature>
<feature type="helix" evidence="16">
    <location>
        <begin position="976"/>
        <end position="988"/>
    </location>
</feature>
<feature type="strand" evidence="16">
    <location>
        <begin position="993"/>
        <end position="996"/>
    </location>
</feature>
<feature type="turn" evidence="16">
    <location>
        <begin position="1002"/>
        <end position="1004"/>
    </location>
</feature>
<feature type="helix" evidence="16">
    <location>
        <begin position="1005"/>
        <end position="1014"/>
    </location>
</feature>
<feature type="strand" evidence="16">
    <location>
        <begin position="1020"/>
        <end position="1024"/>
    </location>
</feature>
<feature type="helix" evidence="16">
    <location>
        <begin position="1025"/>
        <end position="1029"/>
    </location>
</feature>
<feature type="strand" evidence="16">
    <location>
        <begin position="1039"/>
        <end position="1044"/>
    </location>
</feature>
<feature type="helix" evidence="16">
    <location>
        <begin position="1049"/>
        <end position="1056"/>
    </location>
</feature>
<feature type="turn" evidence="16">
    <location>
        <begin position="1057"/>
        <end position="1059"/>
    </location>
</feature>
<feature type="strand" evidence="16">
    <location>
        <begin position="1068"/>
        <end position="1075"/>
    </location>
</feature>
<feature type="helix" evidence="16">
    <location>
        <begin position="1079"/>
        <end position="1086"/>
    </location>
</feature>
<feature type="helix" evidence="16">
    <location>
        <begin position="1094"/>
        <end position="1096"/>
    </location>
</feature>
<feature type="helix" evidence="16">
    <location>
        <begin position="1109"/>
        <end position="1122"/>
    </location>
</feature>
<accession>P31380</accession>
<accession>D6VPJ9</accession>
<sequence>MSGSHSNDEDDVVQVPETSSPTKVASSSPLKPTSPTVPDASVASLRSRFTFKPSDPSEGAHTSKPLPSGSPEVALVNLAREFPDFSQTLVQAVFKSNSFNLQSARERLTRLRQQRQNWTWNKNASPKKSETPPPVKKSLPLANTGRLSSIHGNINNKSSKITVAKQKTSIFDRYSNVINQKQYTFELPTNLNIDSEALSKLPVNYNKKRRLVRADQHPIGKSYESSATQLGSAREKLLANRKYGRHANDNDEEEEESMMTDDDDASGDDYTESTPQINLDEQVLQFINDSDIVDLSDLSDTTMHKAQLIASHRPYSSLNAFVNTNFNDKDTEENASNKRKRRAAASANESERLLDKITQSIRGYNAIESVIKKCSSYGDLVTSQMKKWGVQVEGDNSELDLMNLGEDDDDDNDDGNNDNNNSNNNNTAGADATSKEKEDTKAVVEGFDETSAEPTPAPAPAPVERETKRIRNTTKPKVVEDEDDDVDLEAIDDELPQSEHEDDDYEEEDEDYNDEEEDVEYDDGDDDDDDDDEFVATRKNTHVISTTSRNGRKPIVKFFKGKPRLLSPEISLKDYQQTGINWLNLLYQNKMSCILADDMGLGKTCQVISFFAYLKQINEPGPHLVVVPSSTLENWLREFQKFAPALKIEPYYGSLQEREELRDILERNAGKYDVIVTTYNLAAGNKYDVSFLKNRNFNVVVYDEGHMLKNSTSERFAKLMKIRANFRLLLTGTPLQNNLKELMSLLEFIMPNLFISKKESFDAIFKQRAKTTDDNKNHNPLLAQEAITRAKTMMKPFILRRRKDQVLKHLPPKHTHIQYCELNAIQKKIYDKEIQIVLEHKRMIKDGELPKDAKEKSKLQSSSSKNLIMALRKASLHPLLFRNIYNDKIITKMSDAILDEPAYAENGNKEYIKEDMSYMTDFELHKLCCNFPNTLSKYQLHNDEWMQSGKIDALKKLLKTIIVDKQEKVLIFSLFTQVLDILEMVLSTLDYKFLRLDGSTQVNDRQLLIDKFYEDKDIPIFILSTKAGGFGINLVCANNVIIFDQSFNPHDDRQAADRAHRVGQTKEVNITTLITKDSIEEKIHQLAKNKLALDSYISEDKKSQDVLESKVSDMLEDIIYDENSKPKGTKE</sequence>
<organism>
    <name type="scientific">Saccharomyces cerevisiae (strain ATCC 204508 / S288c)</name>
    <name type="common">Baker's yeast</name>
    <dbReference type="NCBI Taxonomy" id="559292"/>
    <lineage>
        <taxon>Eukaryota</taxon>
        <taxon>Fungi</taxon>
        <taxon>Dikarya</taxon>
        <taxon>Ascomycota</taxon>
        <taxon>Saccharomycotina</taxon>
        <taxon>Saccharomycetes</taxon>
        <taxon>Saccharomycetales</taxon>
        <taxon>Saccharomycetaceae</taxon>
        <taxon>Saccharomyces</taxon>
    </lineage>
</organism>
<keyword id="KW-0002">3D-structure</keyword>
<keyword id="KW-0067">ATP-binding</keyword>
<keyword id="KW-0156">Chromatin regulator</keyword>
<keyword id="KW-0158">Chromosome</keyword>
<keyword id="KW-0227">DNA damage</keyword>
<keyword id="KW-0234">DNA repair</keyword>
<keyword id="KW-0238">DNA-binding</keyword>
<keyword id="KW-0347">Helicase</keyword>
<keyword id="KW-0378">Hydrolase</keyword>
<keyword id="KW-0547">Nucleotide-binding</keyword>
<keyword id="KW-0539">Nucleus</keyword>
<keyword id="KW-0597">Phosphoprotein</keyword>
<keyword id="KW-1185">Reference proteome</keyword>
<protein>
    <recommendedName>
        <fullName>ATP-dependent helicase FUN30</fullName>
        <ecNumber>3.6.4.12</ecNumber>
    </recommendedName>
</protein>
<evidence type="ECO:0000255" key="1">
    <source>
        <dbReference type="PROSITE-ProRule" id="PRU00541"/>
    </source>
</evidence>
<evidence type="ECO:0000255" key="2">
    <source>
        <dbReference type="PROSITE-ProRule" id="PRU00542"/>
    </source>
</evidence>
<evidence type="ECO:0000256" key="3">
    <source>
        <dbReference type="SAM" id="MobiDB-lite"/>
    </source>
</evidence>
<evidence type="ECO:0000269" key="4">
    <source>
    </source>
</evidence>
<evidence type="ECO:0000269" key="5">
    <source>
    </source>
</evidence>
<evidence type="ECO:0000269" key="6">
    <source>
    </source>
</evidence>
<evidence type="ECO:0000269" key="7">
    <source>
    </source>
</evidence>
<evidence type="ECO:0000269" key="8">
    <source>
    </source>
</evidence>
<evidence type="ECO:0000269" key="9">
    <source>
    </source>
</evidence>
<evidence type="ECO:0000269" key="10">
    <source>
    </source>
</evidence>
<evidence type="ECO:0000305" key="11"/>
<evidence type="ECO:0000305" key="12">
    <source>
    </source>
</evidence>
<evidence type="ECO:0000305" key="13">
    <source>
    </source>
</evidence>
<evidence type="ECO:0007744" key="14">
    <source>
    </source>
</evidence>
<evidence type="ECO:0007744" key="15">
    <source>
    </source>
</evidence>
<evidence type="ECO:0007829" key="16">
    <source>
        <dbReference type="PDB" id="5GN1"/>
    </source>
</evidence>
<name>FUN30_YEAST</name>